<evidence type="ECO:0000250" key="1">
    <source>
        <dbReference type="UniProtKB" id="O15239"/>
    </source>
</evidence>
<evidence type="ECO:0000255" key="2"/>
<evidence type="ECO:0000269" key="3">
    <source>
    </source>
</evidence>
<evidence type="ECO:0000305" key="4"/>
<evidence type="ECO:0007744" key="5">
    <source>
        <dbReference type="PDB" id="8PW5"/>
    </source>
</evidence>
<evidence type="ECO:0007829" key="6">
    <source>
        <dbReference type="PDB" id="8IB5"/>
    </source>
</evidence>
<evidence type="ECO:0007829" key="7">
    <source>
        <dbReference type="PDB" id="8OM1"/>
    </source>
</evidence>
<dbReference type="EMBL" id="Y07708">
    <property type="protein sequence ID" value="CAA68977.1"/>
    <property type="molecule type" value="mRNA"/>
</dbReference>
<dbReference type="EMBL" id="BC024364">
    <property type="protein sequence ID" value="AAH24364.1"/>
    <property type="molecule type" value="mRNA"/>
</dbReference>
<dbReference type="CCDS" id="CCDS40928.1"/>
<dbReference type="RefSeq" id="NP_062316.1">
    <property type="nucleotide sequence ID" value="NM_019443.2"/>
</dbReference>
<dbReference type="PDB" id="6G2J">
    <property type="method" value="EM"/>
    <property type="resolution" value="3.30 A"/>
    <property type="chains" value="a=1-67"/>
</dbReference>
<dbReference type="PDB" id="6G72">
    <property type="method" value="EM"/>
    <property type="resolution" value="3.90 A"/>
    <property type="chains" value="a=1-70"/>
</dbReference>
<dbReference type="PDB" id="6ZR2">
    <property type="method" value="EM"/>
    <property type="resolution" value="3.10 A"/>
    <property type="chains" value="a=1-70"/>
</dbReference>
<dbReference type="PDB" id="6ZTQ">
    <property type="method" value="EM"/>
    <property type="resolution" value="3.00 A"/>
    <property type="chains" value="a=1-70"/>
</dbReference>
<dbReference type="PDB" id="7AK5">
    <property type="method" value="EM"/>
    <property type="resolution" value="3.17 A"/>
    <property type="chains" value="a=1-68"/>
</dbReference>
<dbReference type="PDB" id="7AK6">
    <property type="method" value="EM"/>
    <property type="resolution" value="3.82 A"/>
    <property type="chains" value="a=1-68"/>
</dbReference>
<dbReference type="PDB" id="7B93">
    <property type="method" value="EM"/>
    <property type="resolution" value="3.04 A"/>
    <property type="chains" value="a=1-70"/>
</dbReference>
<dbReference type="PDB" id="7PSA">
    <property type="method" value="EM"/>
    <property type="resolution" value="3.40 A"/>
    <property type="chains" value="a=1-70"/>
</dbReference>
<dbReference type="PDB" id="8C2S">
    <property type="method" value="EM"/>
    <property type="resolution" value="3.90 A"/>
    <property type="chains" value="a=1-70"/>
</dbReference>
<dbReference type="PDB" id="8CA3">
    <property type="method" value="EM"/>
    <property type="resolution" value="3.20 A"/>
    <property type="chains" value="a=1-70"/>
</dbReference>
<dbReference type="PDB" id="8CA5">
    <property type="method" value="EM"/>
    <property type="resolution" value="3.90 A"/>
    <property type="chains" value="a=1-70"/>
</dbReference>
<dbReference type="PDB" id="8IAO">
    <property type="method" value="EM"/>
    <property type="resolution" value="4.20 A"/>
    <property type="chains" value="a=1-70"/>
</dbReference>
<dbReference type="PDB" id="8IAP">
    <property type="method" value="EM"/>
    <property type="resolution" value="3.20 A"/>
    <property type="chains" value="a=1-70"/>
</dbReference>
<dbReference type="PDB" id="8IB4">
    <property type="method" value="EM"/>
    <property type="resolution" value="4.30 A"/>
    <property type="chains" value="a=1-70"/>
</dbReference>
<dbReference type="PDB" id="8IB5">
    <property type="method" value="EM"/>
    <property type="resolution" value="3.30 A"/>
    <property type="chains" value="a=1-70"/>
</dbReference>
<dbReference type="PDB" id="8IB9">
    <property type="method" value="EM"/>
    <property type="resolution" value="4.30 A"/>
    <property type="chains" value="a=1-70"/>
</dbReference>
<dbReference type="PDB" id="8IBA">
    <property type="method" value="EM"/>
    <property type="resolution" value="3.20 A"/>
    <property type="chains" value="a=1-70"/>
</dbReference>
<dbReference type="PDB" id="8IBD">
    <property type="method" value="EM"/>
    <property type="resolution" value="4.20 A"/>
    <property type="chains" value="a=1-70"/>
</dbReference>
<dbReference type="PDB" id="8IBE">
    <property type="method" value="EM"/>
    <property type="resolution" value="3.30 A"/>
    <property type="chains" value="a=1-70"/>
</dbReference>
<dbReference type="PDB" id="8IC2">
    <property type="method" value="EM"/>
    <property type="resolution" value="6.30 A"/>
    <property type="chains" value="a=1-70"/>
</dbReference>
<dbReference type="PDB" id="8IC3">
    <property type="method" value="EM"/>
    <property type="resolution" value="3.20 A"/>
    <property type="chains" value="a=1-70"/>
</dbReference>
<dbReference type="PDB" id="8OLT">
    <property type="method" value="EM"/>
    <property type="resolution" value="2.84 A"/>
    <property type="chains" value="a=1-70"/>
</dbReference>
<dbReference type="PDB" id="8OM1">
    <property type="method" value="EM"/>
    <property type="resolution" value="2.39 A"/>
    <property type="chains" value="a=1-70"/>
</dbReference>
<dbReference type="PDB" id="8PW5">
    <property type="method" value="EM"/>
    <property type="resolution" value="3.60 A"/>
    <property type="chains" value="a1=1-70"/>
</dbReference>
<dbReference type="PDB" id="8PW6">
    <property type="method" value="EM"/>
    <property type="resolution" value="3.30 A"/>
    <property type="chains" value="a1=1-70"/>
</dbReference>
<dbReference type="PDB" id="8PW7">
    <property type="method" value="EM"/>
    <property type="resolution" value="3.50 A"/>
    <property type="chains" value="a1=1-70"/>
</dbReference>
<dbReference type="PDB" id="8RGP">
    <property type="method" value="EM"/>
    <property type="resolution" value="3.00 A"/>
    <property type="chains" value="a=1-70"/>
</dbReference>
<dbReference type="PDB" id="8RGQ">
    <property type="method" value="EM"/>
    <property type="resolution" value="3.00 A"/>
    <property type="chains" value="a=1-70"/>
</dbReference>
<dbReference type="PDB" id="8RGR">
    <property type="method" value="EM"/>
    <property type="resolution" value="2.90 A"/>
    <property type="chains" value="a=1-70"/>
</dbReference>
<dbReference type="PDB" id="8RGT">
    <property type="method" value="EM"/>
    <property type="resolution" value="3.10 A"/>
    <property type="chains" value="a=1-70"/>
</dbReference>
<dbReference type="PDB" id="8UCA">
    <property type="method" value="EM"/>
    <property type="resolution" value="3.70 A"/>
    <property type="chains" value="A1/a1=1-70"/>
</dbReference>
<dbReference type="PDB" id="8XNL">
    <property type="method" value="EM"/>
    <property type="resolution" value="3.10 A"/>
    <property type="chains" value="a=1-70"/>
</dbReference>
<dbReference type="PDB" id="8XNM">
    <property type="method" value="EM"/>
    <property type="resolution" value="3.50 A"/>
    <property type="chains" value="a=1-70"/>
</dbReference>
<dbReference type="PDB" id="8XNN">
    <property type="method" value="EM"/>
    <property type="resolution" value="3.60 A"/>
    <property type="chains" value="a=1-70"/>
</dbReference>
<dbReference type="PDB" id="8XNO">
    <property type="method" value="EM"/>
    <property type="resolution" value="3.40 A"/>
    <property type="chains" value="a=1-70"/>
</dbReference>
<dbReference type="PDB" id="8XNP">
    <property type="method" value="EM"/>
    <property type="resolution" value="3.50 A"/>
    <property type="chains" value="a=1-70"/>
</dbReference>
<dbReference type="PDB" id="8XNQ">
    <property type="method" value="EM"/>
    <property type="resolution" value="3.70 A"/>
    <property type="chains" value="a=1-70"/>
</dbReference>
<dbReference type="PDB" id="8XNR">
    <property type="method" value="EM"/>
    <property type="resolution" value="3.30 A"/>
    <property type="chains" value="a=1-70"/>
</dbReference>
<dbReference type="PDB" id="8XNS">
    <property type="method" value="EM"/>
    <property type="resolution" value="3.50 A"/>
    <property type="chains" value="a=1-70"/>
</dbReference>
<dbReference type="PDB" id="8XNT">
    <property type="method" value="EM"/>
    <property type="resolution" value="4.10 A"/>
    <property type="chains" value="a=1-70"/>
</dbReference>
<dbReference type="PDB" id="8XNU">
    <property type="method" value="EM"/>
    <property type="resolution" value="3.60 A"/>
    <property type="chains" value="a=1-70"/>
</dbReference>
<dbReference type="PDB" id="8XNV">
    <property type="method" value="EM"/>
    <property type="resolution" value="3.30 A"/>
    <property type="chains" value="a=1-70"/>
</dbReference>
<dbReference type="PDB" id="8XNW">
    <property type="method" value="EM"/>
    <property type="resolution" value="3.60 A"/>
    <property type="chains" value="a=1-70"/>
</dbReference>
<dbReference type="PDB" id="8XNX">
    <property type="method" value="EM"/>
    <property type="resolution" value="3.50 A"/>
    <property type="chains" value="a=1-70"/>
</dbReference>
<dbReference type="PDB" id="8XNY">
    <property type="method" value="EM"/>
    <property type="resolution" value="4.10 A"/>
    <property type="chains" value="a=1-70"/>
</dbReference>
<dbReference type="PDB" id="8XNZ">
    <property type="method" value="EM"/>
    <property type="resolution" value="3.30 A"/>
    <property type="chains" value="a=1-70"/>
</dbReference>
<dbReference type="PDB" id="8XO0">
    <property type="method" value="EM"/>
    <property type="resolution" value="4.20 A"/>
    <property type="chains" value="a=1-70"/>
</dbReference>
<dbReference type="PDBsum" id="6G2J"/>
<dbReference type="PDBsum" id="6G72"/>
<dbReference type="PDBsum" id="6ZR2"/>
<dbReference type="PDBsum" id="6ZTQ"/>
<dbReference type="PDBsum" id="7AK5"/>
<dbReference type="PDBsum" id="7AK6"/>
<dbReference type="PDBsum" id="7B93"/>
<dbReference type="PDBsum" id="7PSA"/>
<dbReference type="PDBsum" id="8C2S"/>
<dbReference type="PDBsum" id="8CA3"/>
<dbReference type="PDBsum" id="8CA5"/>
<dbReference type="PDBsum" id="8IAO"/>
<dbReference type="PDBsum" id="8IAP"/>
<dbReference type="PDBsum" id="8IB4"/>
<dbReference type="PDBsum" id="8IB5"/>
<dbReference type="PDBsum" id="8IB9"/>
<dbReference type="PDBsum" id="8IBA"/>
<dbReference type="PDBsum" id="8IBD"/>
<dbReference type="PDBsum" id="8IBE"/>
<dbReference type="PDBsum" id="8IC2"/>
<dbReference type="PDBsum" id="8IC3"/>
<dbReference type="PDBsum" id="8OLT"/>
<dbReference type="PDBsum" id="8OM1"/>
<dbReference type="PDBsum" id="8PW5"/>
<dbReference type="PDBsum" id="8PW6"/>
<dbReference type="PDBsum" id="8PW7"/>
<dbReference type="PDBsum" id="8RGP"/>
<dbReference type="PDBsum" id="8RGQ"/>
<dbReference type="PDBsum" id="8RGR"/>
<dbReference type="PDBsum" id="8RGT"/>
<dbReference type="PDBsum" id="8UCA"/>
<dbReference type="PDBsum" id="8XNL"/>
<dbReference type="PDBsum" id="8XNM"/>
<dbReference type="PDBsum" id="8XNN"/>
<dbReference type="PDBsum" id="8XNO"/>
<dbReference type="PDBsum" id="8XNP"/>
<dbReference type="PDBsum" id="8XNQ"/>
<dbReference type="PDBsum" id="8XNR"/>
<dbReference type="PDBsum" id="8XNS"/>
<dbReference type="PDBsum" id="8XNT"/>
<dbReference type="PDBsum" id="8XNU"/>
<dbReference type="PDBsum" id="8XNV"/>
<dbReference type="PDBsum" id="8XNW"/>
<dbReference type="PDBsum" id="8XNX"/>
<dbReference type="PDBsum" id="8XNY"/>
<dbReference type="PDBsum" id="8XNZ"/>
<dbReference type="PDBsum" id="8XO0"/>
<dbReference type="EMDB" id="EMD-16398"/>
<dbReference type="EMDB" id="EMD-16516"/>
<dbReference type="EMDB" id="EMD-16518"/>
<dbReference type="EMDB" id="EMD-16962"/>
<dbReference type="EMDB" id="EMD-16965"/>
<dbReference type="EMDB" id="EMD-17989"/>
<dbReference type="EMDB" id="EMD-17990"/>
<dbReference type="EMDB" id="EMD-17991"/>
<dbReference type="EMDB" id="EMD-19145"/>
<dbReference type="EMDB" id="EMD-19146"/>
<dbReference type="EMDB" id="EMD-19147"/>
<dbReference type="EMDB" id="EMD-19148"/>
<dbReference type="EMDB" id="EMD-35313"/>
<dbReference type="EMDB" id="EMD-35314"/>
<dbReference type="EMDB" id="EMD-35331"/>
<dbReference type="EMDB" id="EMD-35332"/>
<dbReference type="EMDB" id="EMD-35336"/>
<dbReference type="EMDB" id="EMD-35337"/>
<dbReference type="EMDB" id="EMD-35340"/>
<dbReference type="EMDB" id="EMD-35341"/>
<dbReference type="EMDB" id="EMD-35352"/>
<dbReference type="EMDB" id="EMD-35353"/>
<dbReference type="EMDB" id="EMD-38506"/>
<dbReference type="EMDB" id="EMD-38507"/>
<dbReference type="EMDB" id="EMD-38508"/>
<dbReference type="EMDB" id="EMD-38509"/>
<dbReference type="EMDB" id="EMD-38510"/>
<dbReference type="EMDB" id="EMD-38511"/>
<dbReference type="EMDB" id="EMD-38512"/>
<dbReference type="EMDB" id="EMD-38513"/>
<dbReference type="EMDB" id="EMD-38514"/>
<dbReference type="EMDB" id="EMD-38515"/>
<dbReference type="EMDB" id="EMD-38516"/>
<dbReference type="EMDB" id="EMD-38517"/>
<dbReference type="EMDB" id="EMD-38518"/>
<dbReference type="EMDB" id="EMD-38519"/>
<dbReference type="EMDB" id="EMD-38520"/>
<dbReference type="EMDB" id="EMD-38521"/>
<dbReference type="EMDB" id="EMD-42122"/>
<dbReference type="EMDB" id="EMD-4356"/>
<dbReference type="SMR" id="O35683"/>
<dbReference type="BioGRID" id="207651">
    <property type="interactions" value="4"/>
</dbReference>
<dbReference type="ComplexPortal" id="CPX-266">
    <property type="entry name" value="Mitochondrial respiratory chain complex I"/>
</dbReference>
<dbReference type="CORUM" id="O35683"/>
<dbReference type="FunCoup" id="O35683">
    <property type="interactions" value="399"/>
</dbReference>
<dbReference type="IntAct" id="O35683">
    <property type="interactions" value="1"/>
</dbReference>
<dbReference type="STRING" id="10090.ENSMUSP00000016571"/>
<dbReference type="GlyGen" id="O35683">
    <property type="glycosylation" value="1 site, 1 O-linked glycan (1 site)"/>
</dbReference>
<dbReference type="iPTMnet" id="O35683"/>
<dbReference type="PhosphoSitePlus" id="O35683"/>
<dbReference type="SwissPalm" id="O35683"/>
<dbReference type="jPOST" id="O35683"/>
<dbReference type="PaxDb" id="10090-ENSMUSP00000016571"/>
<dbReference type="PeptideAtlas" id="O35683"/>
<dbReference type="ProteomicsDB" id="287466"/>
<dbReference type="Pumba" id="O35683"/>
<dbReference type="Antibodypedia" id="29846">
    <property type="antibodies" value="229 antibodies from 27 providers"/>
</dbReference>
<dbReference type="DNASU" id="54405"/>
<dbReference type="Ensembl" id="ENSMUST00000016571.8">
    <property type="protein sequence ID" value="ENSMUSP00000016571.8"/>
    <property type="gene ID" value="ENSMUSG00000016427.8"/>
</dbReference>
<dbReference type="GeneID" id="54405"/>
<dbReference type="KEGG" id="mmu:54405"/>
<dbReference type="UCSC" id="uc009syi.1">
    <property type="organism name" value="mouse"/>
</dbReference>
<dbReference type="AGR" id="MGI:1929511"/>
<dbReference type="CTD" id="4694"/>
<dbReference type="MGI" id="MGI:1929511">
    <property type="gene designation" value="Ndufa1"/>
</dbReference>
<dbReference type="VEuPathDB" id="HostDB:ENSMUSG00000016427"/>
<dbReference type="eggNOG" id="ENOG502S3S5">
    <property type="taxonomic scope" value="Eukaryota"/>
</dbReference>
<dbReference type="GeneTree" id="ENSGT00390000007560"/>
<dbReference type="HOGENOM" id="CLU_185502_2_0_1"/>
<dbReference type="InParanoid" id="O35683"/>
<dbReference type="OMA" id="WALMERD"/>
<dbReference type="OrthoDB" id="1920692at2759"/>
<dbReference type="PhylomeDB" id="O35683"/>
<dbReference type="TreeFam" id="TF333394"/>
<dbReference type="Reactome" id="R-MMU-611105">
    <property type="pathway name" value="Respiratory electron transport"/>
</dbReference>
<dbReference type="Reactome" id="R-MMU-6799198">
    <property type="pathway name" value="Complex I biogenesis"/>
</dbReference>
<dbReference type="BioGRID-ORCS" id="54405">
    <property type="hits" value="28 hits in 76 CRISPR screens"/>
</dbReference>
<dbReference type="ChiTaRS" id="Ndufa1">
    <property type="organism name" value="mouse"/>
</dbReference>
<dbReference type="PRO" id="PR:O35683"/>
<dbReference type="Proteomes" id="UP000000589">
    <property type="component" value="Chromosome X"/>
</dbReference>
<dbReference type="RNAct" id="O35683">
    <property type="molecule type" value="protein"/>
</dbReference>
<dbReference type="Bgee" id="ENSMUSG00000016427">
    <property type="expression patterns" value="Expressed in choroid plexus epithelium and 253 other cell types or tissues"/>
</dbReference>
<dbReference type="ExpressionAtlas" id="O35683">
    <property type="expression patterns" value="baseline and differential"/>
</dbReference>
<dbReference type="GO" id="GO:0005743">
    <property type="term" value="C:mitochondrial inner membrane"/>
    <property type="evidence" value="ECO:0000314"/>
    <property type="project" value="UniProtKB"/>
</dbReference>
<dbReference type="GO" id="GO:0005739">
    <property type="term" value="C:mitochondrion"/>
    <property type="evidence" value="ECO:0007005"/>
    <property type="project" value="MGI"/>
</dbReference>
<dbReference type="GO" id="GO:0045271">
    <property type="term" value="C:respiratory chain complex I"/>
    <property type="evidence" value="ECO:0000314"/>
    <property type="project" value="UniProtKB"/>
</dbReference>
<dbReference type="GO" id="GO:0009060">
    <property type="term" value="P:aerobic respiration"/>
    <property type="evidence" value="ECO:0000303"/>
    <property type="project" value="ComplexPortal"/>
</dbReference>
<dbReference type="GO" id="GO:0042776">
    <property type="term" value="P:proton motive force-driven mitochondrial ATP synthesis"/>
    <property type="evidence" value="ECO:0000303"/>
    <property type="project" value="ComplexPortal"/>
</dbReference>
<dbReference type="InterPro" id="IPR017384">
    <property type="entry name" value="NADH_Ub_cplx-1_asu_su-1"/>
</dbReference>
<dbReference type="PANTHER" id="PTHR17098:SF2">
    <property type="entry name" value="NADH DEHYDROGENASE [UBIQUINONE] 1 ALPHA SUBCOMPLEX SUBUNIT 1"/>
    <property type="match status" value="1"/>
</dbReference>
<dbReference type="PANTHER" id="PTHR17098">
    <property type="entry name" value="NADH-UBIQUINONE OXIDOREDUCTASE MWFE SUBUNIT"/>
    <property type="match status" value="1"/>
</dbReference>
<dbReference type="Pfam" id="PF15879">
    <property type="entry name" value="MWFE"/>
    <property type="match status" value="1"/>
</dbReference>
<dbReference type="PIRSF" id="PIRSF038095">
    <property type="entry name" value="NDUA1"/>
    <property type="match status" value="1"/>
</dbReference>
<accession>O35683</accession>
<feature type="chain" id="PRO_0000118818" description="NADH dehydrogenase [ubiquinone] 1 alpha subcomplex subunit 1">
    <location>
        <begin position="1"/>
        <end position="70"/>
    </location>
</feature>
<feature type="transmembrane region" description="Helical" evidence="2">
    <location>
        <begin position="1"/>
        <end position="21"/>
    </location>
</feature>
<feature type="helix" evidence="7">
    <location>
        <begin position="2"/>
        <end position="5"/>
    </location>
</feature>
<feature type="helix" evidence="7">
    <location>
        <begin position="6"/>
        <end position="15"/>
    </location>
</feature>
<feature type="helix" evidence="7">
    <location>
        <begin position="18"/>
        <end position="30"/>
    </location>
</feature>
<feature type="turn" evidence="7">
    <location>
        <begin position="31"/>
        <end position="33"/>
    </location>
</feature>
<feature type="helix" evidence="7">
    <location>
        <begin position="42"/>
        <end position="54"/>
    </location>
</feature>
<feature type="strand" evidence="7">
    <location>
        <begin position="55"/>
        <end position="58"/>
    </location>
</feature>
<feature type="strand" evidence="6">
    <location>
        <begin position="59"/>
        <end position="61"/>
    </location>
</feature>
<feature type="helix" evidence="7">
    <location>
        <begin position="66"/>
        <end position="68"/>
    </location>
</feature>
<gene>
    <name type="primary">Ndufa1</name>
</gene>
<protein>
    <recommendedName>
        <fullName>NADH dehydrogenase [ubiquinone] 1 alpha subcomplex subunit 1</fullName>
    </recommendedName>
    <alternativeName>
        <fullName>Complex I-MWFE</fullName>
        <shortName>CI-MWFE</shortName>
    </alternativeName>
    <alternativeName>
        <fullName>NADH-ubiquinone oxidoreductase MWFE subunit</fullName>
    </alternativeName>
</protein>
<name>NDUA1_MOUSE</name>
<organism>
    <name type="scientific">Mus musculus</name>
    <name type="common">Mouse</name>
    <dbReference type="NCBI Taxonomy" id="10090"/>
    <lineage>
        <taxon>Eukaryota</taxon>
        <taxon>Metazoa</taxon>
        <taxon>Chordata</taxon>
        <taxon>Craniata</taxon>
        <taxon>Vertebrata</taxon>
        <taxon>Euteleostomi</taxon>
        <taxon>Mammalia</taxon>
        <taxon>Eutheria</taxon>
        <taxon>Euarchontoglires</taxon>
        <taxon>Glires</taxon>
        <taxon>Rodentia</taxon>
        <taxon>Myomorpha</taxon>
        <taxon>Muroidea</taxon>
        <taxon>Muridae</taxon>
        <taxon>Murinae</taxon>
        <taxon>Mus</taxon>
        <taxon>Mus</taxon>
    </lineage>
</organism>
<keyword id="KW-0002">3D-structure</keyword>
<keyword id="KW-0249">Electron transport</keyword>
<keyword id="KW-0472">Membrane</keyword>
<keyword id="KW-0496">Mitochondrion</keyword>
<keyword id="KW-0999">Mitochondrion inner membrane</keyword>
<keyword id="KW-1185">Reference proteome</keyword>
<keyword id="KW-0679">Respiratory chain</keyword>
<keyword id="KW-0812">Transmembrane</keyword>
<keyword id="KW-1133">Transmembrane helix</keyword>
<keyword id="KW-0813">Transport</keyword>
<proteinExistence type="evidence at protein level"/>
<comment type="function">
    <text evidence="1 3">Accessory subunit of the mitochondrial membrane respiratory chain NADH dehydrogenase (Complex I), that is believed not to be involved in catalysis (PubMed:38575788). Complex I functions in the transfer of electrons from NADH to the respiratory chain (PubMed:38575788). The immediate electron acceptor for the enzyme is believed to be ubiquinone (By similarity).</text>
</comment>
<comment type="subunit">
    <text evidence="3">Complex I is composed of 45 different subunits.</text>
</comment>
<comment type="subcellular location">
    <subcellularLocation>
        <location evidence="3">Mitochondrion inner membrane</location>
        <topology evidence="3">Single-pass membrane protein</topology>
        <orientation evidence="3">Matrix side</orientation>
    </subcellularLocation>
</comment>
<comment type="similarity">
    <text evidence="4">Belongs to the complex I NDUFA1 subunit family.</text>
</comment>
<sequence length="70" mass="8139">MWFEILPGLAIMGVCLVIPGVSTAYIHKFTNGGKEKRVARVQYQWYLMERDRRISGVNRYYVSKGLENID</sequence>
<reference key="1">
    <citation type="submission" date="1997-07" db="EMBL/GenBank/DDBJ databases">
        <authorList>
            <person name="Frattini A."/>
            <person name="Faranda S."/>
            <person name="Bagnasco L."/>
            <person name="Patrosso C."/>
            <person name="Nulli P."/>
            <person name="Vezzoni P."/>
        </authorList>
    </citation>
    <scope>NUCLEOTIDE SEQUENCE [MRNA]</scope>
</reference>
<reference key="2">
    <citation type="journal article" date="2004" name="Genome Res.">
        <title>The status, quality, and expansion of the NIH full-length cDNA project: the Mammalian Gene Collection (MGC).</title>
        <authorList>
            <consortium name="The MGC Project Team"/>
        </authorList>
    </citation>
    <scope>NUCLEOTIDE SEQUENCE [LARGE SCALE MRNA]</scope>
    <source>
        <strain>C57BL/6J</strain>
        <tissue>Mammary gland</tissue>
    </source>
</reference>
<reference key="3">
    <citation type="journal article" date="2010" name="Cell">
        <title>A tissue-specific atlas of mouse protein phosphorylation and expression.</title>
        <authorList>
            <person name="Huttlin E.L."/>
            <person name="Jedrychowski M.P."/>
            <person name="Elias J.E."/>
            <person name="Goswami T."/>
            <person name="Rad R."/>
            <person name="Beausoleil S.A."/>
            <person name="Villen J."/>
            <person name="Haas W."/>
            <person name="Sowa M.E."/>
            <person name="Gygi S.P."/>
        </authorList>
    </citation>
    <scope>IDENTIFICATION BY MASS SPECTROMETRY [LARGE SCALE ANALYSIS]</scope>
    <source>
        <tissue>Brain</tissue>
        <tissue>Brown adipose tissue</tissue>
        <tissue>Heart</tissue>
        <tissue>Kidney</tissue>
        <tissue>Liver</tissue>
        <tissue>Testis</tissue>
    </source>
</reference>
<reference evidence="5" key="4">
    <citation type="journal article" date="2024" name="Nat. Struct. Mol. Biol.">
        <title>SCAF1 drives the compositional diversity of mammalian respirasomes.</title>
        <authorList>
            <person name="Vercellino I."/>
            <person name="Sazanov L.A."/>
        </authorList>
    </citation>
    <scope>STRUCTURE BY ELECTRON MICROSCOPY (3.60 ANGSTROMS) IN COMPLEX WITH MITOCHONDRIAL RESPIRATORY SUPERCOMPLEX</scope>
    <scope>FUNCTION</scope>
    <scope>SUBCELLULAR LOCATION</scope>
    <scope>SUBUNIT</scope>
</reference>